<keyword id="KW-0963">Cytoplasm</keyword>
<keyword id="KW-0489">Methyltransferase</keyword>
<keyword id="KW-0698">rRNA processing</keyword>
<keyword id="KW-0949">S-adenosyl-L-methionine</keyword>
<keyword id="KW-0808">Transferase</keyword>
<feature type="chain" id="PRO_1000010195" description="Ribosomal RNA small subunit methyltransferase G">
    <location>
        <begin position="1"/>
        <end position="191"/>
    </location>
</feature>
<feature type="binding site" evidence="1">
    <location>
        <position position="62"/>
    </location>
    <ligand>
        <name>S-adenosyl-L-methionine</name>
        <dbReference type="ChEBI" id="CHEBI:59789"/>
    </ligand>
</feature>
<feature type="binding site" evidence="1">
    <location>
        <position position="67"/>
    </location>
    <ligand>
        <name>S-adenosyl-L-methionine</name>
        <dbReference type="ChEBI" id="CHEBI:59789"/>
    </ligand>
</feature>
<feature type="binding site" evidence="1">
    <location>
        <begin position="111"/>
        <end position="112"/>
    </location>
    <ligand>
        <name>S-adenosyl-L-methionine</name>
        <dbReference type="ChEBI" id="CHEBI:59789"/>
    </ligand>
</feature>
<feature type="binding site" evidence="1">
    <location>
        <position position="124"/>
    </location>
    <ligand>
        <name>S-adenosyl-L-methionine</name>
        <dbReference type="ChEBI" id="CHEBI:59789"/>
    </ligand>
</feature>
<proteinExistence type="inferred from homology"/>
<reference key="1">
    <citation type="submission" date="2007-09" db="EMBL/GenBank/DDBJ databases">
        <title>Complete genome sequence of Rickettsia akari.</title>
        <authorList>
            <person name="Madan A."/>
            <person name="Fahey J."/>
            <person name="Helton E."/>
            <person name="Ketteman M."/>
            <person name="Madan A."/>
            <person name="Rodrigues S."/>
            <person name="Sanchez A."/>
            <person name="Whiting M."/>
            <person name="Dasch G."/>
            <person name="Eremeeva M."/>
        </authorList>
    </citation>
    <scope>NUCLEOTIDE SEQUENCE [LARGE SCALE GENOMIC DNA]</scope>
    <source>
        <strain>Hartford</strain>
    </source>
</reference>
<dbReference type="EC" id="2.1.1.170" evidence="1"/>
<dbReference type="EMBL" id="CP000847">
    <property type="protein sequence ID" value="ABV74425.1"/>
    <property type="molecule type" value="Genomic_DNA"/>
</dbReference>
<dbReference type="RefSeq" id="WP_012013295.1">
    <property type="nucleotide sequence ID" value="NC_009881.1"/>
</dbReference>
<dbReference type="SMR" id="A8GM00"/>
<dbReference type="STRING" id="293614.A1C_00460"/>
<dbReference type="KEGG" id="rak:A1C_00460"/>
<dbReference type="eggNOG" id="COG0357">
    <property type="taxonomic scope" value="Bacteria"/>
</dbReference>
<dbReference type="HOGENOM" id="CLU_065341_1_1_5"/>
<dbReference type="Proteomes" id="UP000006830">
    <property type="component" value="Chromosome"/>
</dbReference>
<dbReference type="GO" id="GO:0005829">
    <property type="term" value="C:cytosol"/>
    <property type="evidence" value="ECO:0007669"/>
    <property type="project" value="TreeGrafter"/>
</dbReference>
<dbReference type="GO" id="GO:0070043">
    <property type="term" value="F:rRNA (guanine-N7-)-methyltransferase activity"/>
    <property type="evidence" value="ECO:0007669"/>
    <property type="project" value="UniProtKB-UniRule"/>
</dbReference>
<dbReference type="Gene3D" id="3.40.50.150">
    <property type="entry name" value="Vaccinia Virus protein VP39"/>
    <property type="match status" value="1"/>
</dbReference>
<dbReference type="HAMAP" id="MF_00074">
    <property type="entry name" value="16SrRNA_methyltr_G"/>
    <property type="match status" value="1"/>
</dbReference>
<dbReference type="InterPro" id="IPR003682">
    <property type="entry name" value="rRNA_ssu_MeTfrase_G"/>
</dbReference>
<dbReference type="InterPro" id="IPR029063">
    <property type="entry name" value="SAM-dependent_MTases_sf"/>
</dbReference>
<dbReference type="NCBIfam" id="TIGR00138">
    <property type="entry name" value="rsmG_gidB"/>
    <property type="match status" value="1"/>
</dbReference>
<dbReference type="PANTHER" id="PTHR31760">
    <property type="entry name" value="S-ADENOSYL-L-METHIONINE-DEPENDENT METHYLTRANSFERASES SUPERFAMILY PROTEIN"/>
    <property type="match status" value="1"/>
</dbReference>
<dbReference type="PANTHER" id="PTHR31760:SF0">
    <property type="entry name" value="S-ADENOSYL-L-METHIONINE-DEPENDENT METHYLTRANSFERASES SUPERFAMILY PROTEIN"/>
    <property type="match status" value="1"/>
</dbReference>
<dbReference type="Pfam" id="PF02527">
    <property type="entry name" value="GidB"/>
    <property type="match status" value="1"/>
</dbReference>
<dbReference type="PIRSF" id="PIRSF003078">
    <property type="entry name" value="GidB"/>
    <property type="match status" value="1"/>
</dbReference>
<dbReference type="SUPFAM" id="SSF53335">
    <property type="entry name" value="S-adenosyl-L-methionine-dependent methyltransferases"/>
    <property type="match status" value="1"/>
</dbReference>
<accession>A8GM00</accession>
<gene>
    <name evidence="1" type="primary">rsmG</name>
    <name type="ordered locus">A1C_00460</name>
</gene>
<organism>
    <name type="scientific">Rickettsia akari (strain Hartford)</name>
    <dbReference type="NCBI Taxonomy" id="293614"/>
    <lineage>
        <taxon>Bacteria</taxon>
        <taxon>Pseudomonadati</taxon>
        <taxon>Pseudomonadota</taxon>
        <taxon>Alphaproteobacteria</taxon>
        <taxon>Rickettsiales</taxon>
        <taxon>Rickettsiaceae</taxon>
        <taxon>Rickettsieae</taxon>
        <taxon>Rickettsia</taxon>
        <taxon>spotted fever group</taxon>
    </lineage>
</organism>
<comment type="function">
    <text evidence="1">Specifically methylates the N7 position of guanine in position 527 of 16S rRNA.</text>
</comment>
<comment type="catalytic activity">
    <reaction evidence="1">
        <text>guanosine(527) in 16S rRNA + S-adenosyl-L-methionine = N(7)-methylguanosine(527) in 16S rRNA + S-adenosyl-L-homocysteine</text>
        <dbReference type="Rhea" id="RHEA:42732"/>
        <dbReference type="Rhea" id="RHEA-COMP:10209"/>
        <dbReference type="Rhea" id="RHEA-COMP:10210"/>
        <dbReference type="ChEBI" id="CHEBI:57856"/>
        <dbReference type="ChEBI" id="CHEBI:59789"/>
        <dbReference type="ChEBI" id="CHEBI:74269"/>
        <dbReference type="ChEBI" id="CHEBI:74480"/>
        <dbReference type="EC" id="2.1.1.170"/>
    </reaction>
</comment>
<comment type="subcellular location">
    <subcellularLocation>
        <location evidence="1">Cytoplasm</location>
    </subcellularLocation>
</comment>
<comment type="similarity">
    <text evidence="1">Belongs to the methyltransferase superfamily. RNA methyltransferase RsmG family.</text>
</comment>
<sequence>MEVSREIIEKLEIFQKLVKKWNKSINLVSGNTIHNFWQRHILDSLQLMQYIDNKEIHLVDIGSGAGFPGIVLSIAGVAKVSLIEADLRKCIFLEKASKISNNNIQIINQRIEKVAIDCSILTCRAFSKLNTIFNCIKNISVQEKVLLLKGKNYLTEIVAAKEMWLFDYLIHQSITCEEGKILEVSNLTKII</sequence>
<name>RSMG_RICAH</name>
<evidence type="ECO:0000255" key="1">
    <source>
        <dbReference type="HAMAP-Rule" id="MF_00074"/>
    </source>
</evidence>
<protein>
    <recommendedName>
        <fullName evidence="1">Ribosomal RNA small subunit methyltransferase G</fullName>
        <ecNumber evidence="1">2.1.1.170</ecNumber>
    </recommendedName>
    <alternativeName>
        <fullName evidence="1">16S rRNA 7-methylguanosine methyltransferase</fullName>
        <shortName evidence="1">16S rRNA m7G methyltransferase</shortName>
    </alternativeName>
</protein>